<organism>
    <name type="scientific">Neisseria gonorrhoeae (strain ATCC 700825 / FA 1090)</name>
    <dbReference type="NCBI Taxonomy" id="242231"/>
    <lineage>
        <taxon>Bacteria</taxon>
        <taxon>Pseudomonadati</taxon>
        <taxon>Pseudomonadota</taxon>
        <taxon>Betaproteobacteria</taxon>
        <taxon>Neisseriales</taxon>
        <taxon>Neisseriaceae</taxon>
        <taxon>Neisseria</taxon>
    </lineage>
</organism>
<keyword id="KW-0143">Chaperone</keyword>
<keyword id="KW-0963">Cytoplasm</keyword>
<keyword id="KW-0653">Protein transport</keyword>
<keyword id="KW-1185">Reference proteome</keyword>
<keyword id="KW-0811">Translocation</keyword>
<keyword id="KW-0813">Transport</keyword>
<evidence type="ECO:0000255" key="1">
    <source>
        <dbReference type="HAMAP-Rule" id="MF_00821"/>
    </source>
</evidence>
<reference key="1">
    <citation type="submission" date="2003-03" db="EMBL/GenBank/DDBJ databases">
        <title>The complete genome sequence of Neisseria gonorrhoeae.</title>
        <authorList>
            <person name="Lewis L.A."/>
            <person name="Gillaspy A.F."/>
            <person name="McLaughlin R.E."/>
            <person name="Gipson M."/>
            <person name="Ducey T.F."/>
            <person name="Ownbey T."/>
            <person name="Hartman K."/>
            <person name="Nydick C."/>
            <person name="Carson M.B."/>
            <person name="Vaughn J."/>
            <person name="Thomson C."/>
            <person name="Song L."/>
            <person name="Lin S."/>
            <person name="Yuan X."/>
            <person name="Najar F."/>
            <person name="Zhan M."/>
            <person name="Ren Q."/>
            <person name="Zhu H."/>
            <person name="Qi S."/>
            <person name="Kenton S.M."/>
            <person name="Lai H."/>
            <person name="White J.D."/>
            <person name="Clifton S."/>
            <person name="Roe B.A."/>
            <person name="Dyer D.W."/>
        </authorList>
    </citation>
    <scope>NUCLEOTIDE SEQUENCE [LARGE SCALE GENOMIC DNA]</scope>
    <source>
        <strain>ATCC 700825 / FA 1090</strain>
    </source>
</reference>
<name>SECB_NEIG1</name>
<proteinExistence type="inferred from homology"/>
<protein>
    <recommendedName>
        <fullName evidence="1">Protein-export protein SecB</fullName>
    </recommendedName>
</protein>
<feature type="chain" id="PRO_0000055386" description="Protein-export protein SecB">
    <location>
        <begin position="1"/>
        <end position="147"/>
    </location>
</feature>
<comment type="function">
    <text evidence="1">One of the proteins required for the normal export of preproteins out of the cell cytoplasm. It is a molecular chaperone that binds to a subset of precursor proteins, maintaining them in a translocation-competent state. It also specifically binds to its receptor SecA.</text>
</comment>
<comment type="subunit">
    <text evidence="1">Homotetramer, a dimer of dimers. One homotetramer interacts with 1 SecA dimer.</text>
</comment>
<comment type="subcellular location">
    <subcellularLocation>
        <location evidence="1">Cytoplasm</location>
    </subcellularLocation>
</comment>
<comment type="similarity">
    <text evidence="1">Belongs to the SecB family.</text>
</comment>
<accession>Q5FAB1</accession>
<dbReference type="EMBL" id="AE004969">
    <property type="protein sequence ID" value="AAW88876.1"/>
    <property type="molecule type" value="Genomic_DNA"/>
</dbReference>
<dbReference type="RefSeq" id="WP_003687381.1">
    <property type="nucleotide sequence ID" value="NC_002946.2"/>
</dbReference>
<dbReference type="RefSeq" id="YP_207288.1">
    <property type="nucleotide sequence ID" value="NC_002946.2"/>
</dbReference>
<dbReference type="SMR" id="Q5FAB1"/>
<dbReference type="STRING" id="242231.NGO_0116"/>
<dbReference type="GeneID" id="66752380"/>
<dbReference type="KEGG" id="ngo:NGO_0116"/>
<dbReference type="PATRIC" id="fig|242231.10.peg.150"/>
<dbReference type="HOGENOM" id="CLU_111574_1_0_4"/>
<dbReference type="Proteomes" id="UP000000535">
    <property type="component" value="Chromosome"/>
</dbReference>
<dbReference type="GO" id="GO:0005737">
    <property type="term" value="C:cytoplasm"/>
    <property type="evidence" value="ECO:0007669"/>
    <property type="project" value="UniProtKB-SubCell"/>
</dbReference>
<dbReference type="GO" id="GO:0051082">
    <property type="term" value="F:unfolded protein binding"/>
    <property type="evidence" value="ECO:0007669"/>
    <property type="project" value="InterPro"/>
</dbReference>
<dbReference type="GO" id="GO:0006457">
    <property type="term" value="P:protein folding"/>
    <property type="evidence" value="ECO:0007669"/>
    <property type="project" value="UniProtKB-UniRule"/>
</dbReference>
<dbReference type="GO" id="GO:0051262">
    <property type="term" value="P:protein tetramerization"/>
    <property type="evidence" value="ECO:0007669"/>
    <property type="project" value="InterPro"/>
</dbReference>
<dbReference type="GO" id="GO:0015031">
    <property type="term" value="P:protein transport"/>
    <property type="evidence" value="ECO:0007669"/>
    <property type="project" value="UniProtKB-UniRule"/>
</dbReference>
<dbReference type="Gene3D" id="3.10.420.10">
    <property type="entry name" value="SecB-like"/>
    <property type="match status" value="1"/>
</dbReference>
<dbReference type="HAMAP" id="MF_00821">
    <property type="entry name" value="SecB"/>
    <property type="match status" value="1"/>
</dbReference>
<dbReference type="InterPro" id="IPR003708">
    <property type="entry name" value="SecB"/>
</dbReference>
<dbReference type="InterPro" id="IPR035958">
    <property type="entry name" value="SecB-like_sf"/>
</dbReference>
<dbReference type="NCBIfam" id="NF004394">
    <property type="entry name" value="PRK05751.1-5"/>
    <property type="match status" value="1"/>
</dbReference>
<dbReference type="NCBIfam" id="TIGR00809">
    <property type="entry name" value="secB"/>
    <property type="match status" value="1"/>
</dbReference>
<dbReference type="PANTHER" id="PTHR36918">
    <property type="match status" value="1"/>
</dbReference>
<dbReference type="PANTHER" id="PTHR36918:SF1">
    <property type="entry name" value="PROTEIN-EXPORT PROTEIN SECB"/>
    <property type="match status" value="1"/>
</dbReference>
<dbReference type="Pfam" id="PF02556">
    <property type="entry name" value="SecB"/>
    <property type="match status" value="1"/>
</dbReference>
<dbReference type="PRINTS" id="PR01594">
    <property type="entry name" value="SECBCHAPRONE"/>
</dbReference>
<dbReference type="SUPFAM" id="SSF54611">
    <property type="entry name" value="SecB-like"/>
    <property type="match status" value="1"/>
</dbReference>
<gene>
    <name evidence="1" type="primary">secB</name>
    <name type="ordered locus">NGO_0116</name>
</gene>
<sequence>MSEELQPVFSIERLYVKDLSLEVPHAPQIFLEQGDPEVDMRVSTGSQKLEDGYYDVDVTVTVTAKLDNERTMFLNEVTQSGIFRLENIPEEDVQLLLGVACPNILFPYAREAVSGTVTRAGFPPVLLAPINFEAIYQQQQEAEAAGA</sequence>